<proteinExistence type="inferred from homology"/>
<gene>
    <name evidence="1" type="primary">queF</name>
    <name type="ordered locus">Ping_2773</name>
</gene>
<organism>
    <name type="scientific">Psychromonas ingrahamii (strain DSM 17664 / CCUG 51855 / 37)</name>
    <dbReference type="NCBI Taxonomy" id="357804"/>
    <lineage>
        <taxon>Bacteria</taxon>
        <taxon>Pseudomonadati</taxon>
        <taxon>Pseudomonadota</taxon>
        <taxon>Gammaproteobacteria</taxon>
        <taxon>Alteromonadales</taxon>
        <taxon>Psychromonadaceae</taxon>
        <taxon>Psychromonas</taxon>
    </lineage>
</organism>
<comment type="function">
    <text evidence="1">Catalyzes the NADPH-dependent reduction of 7-cyano-7-deazaguanine (preQ0) to 7-aminomethyl-7-deazaguanine (preQ1).</text>
</comment>
<comment type="catalytic activity">
    <reaction evidence="1">
        <text>7-aminomethyl-7-carbaguanine + 2 NADP(+) = 7-cyano-7-deazaguanine + 2 NADPH + 3 H(+)</text>
        <dbReference type="Rhea" id="RHEA:13409"/>
        <dbReference type="ChEBI" id="CHEBI:15378"/>
        <dbReference type="ChEBI" id="CHEBI:45075"/>
        <dbReference type="ChEBI" id="CHEBI:57783"/>
        <dbReference type="ChEBI" id="CHEBI:58349"/>
        <dbReference type="ChEBI" id="CHEBI:58703"/>
        <dbReference type="EC" id="1.7.1.13"/>
    </reaction>
</comment>
<comment type="pathway">
    <text evidence="1">tRNA modification; tRNA-queuosine biosynthesis.</text>
</comment>
<comment type="subunit">
    <text evidence="1">Homodimer.</text>
</comment>
<comment type="subcellular location">
    <subcellularLocation>
        <location evidence="1">Cytoplasm</location>
    </subcellularLocation>
</comment>
<comment type="similarity">
    <text evidence="1">Belongs to the GTP cyclohydrolase I family. QueF type 2 subfamily.</text>
</comment>
<evidence type="ECO:0000255" key="1">
    <source>
        <dbReference type="HAMAP-Rule" id="MF_00817"/>
    </source>
</evidence>
<dbReference type="EC" id="1.7.1.13" evidence="1"/>
<dbReference type="EMBL" id="CP000510">
    <property type="protein sequence ID" value="ABM04480.1"/>
    <property type="molecule type" value="Genomic_DNA"/>
</dbReference>
<dbReference type="RefSeq" id="WP_011771035.1">
    <property type="nucleotide sequence ID" value="NC_008709.1"/>
</dbReference>
<dbReference type="SMR" id="A1SYB5"/>
<dbReference type="STRING" id="357804.Ping_2773"/>
<dbReference type="KEGG" id="pin:Ping_2773"/>
<dbReference type="eggNOG" id="COG0780">
    <property type="taxonomic scope" value="Bacteria"/>
</dbReference>
<dbReference type="eggNOG" id="COG2904">
    <property type="taxonomic scope" value="Bacteria"/>
</dbReference>
<dbReference type="HOGENOM" id="CLU_054738_0_0_6"/>
<dbReference type="OrthoDB" id="9789995at2"/>
<dbReference type="UniPathway" id="UPA00392"/>
<dbReference type="Proteomes" id="UP000000639">
    <property type="component" value="Chromosome"/>
</dbReference>
<dbReference type="GO" id="GO:0005737">
    <property type="term" value="C:cytoplasm"/>
    <property type="evidence" value="ECO:0007669"/>
    <property type="project" value="UniProtKB-SubCell"/>
</dbReference>
<dbReference type="GO" id="GO:0033739">
    <property type="term" value="F:preQ1 synthase activity"/>
    <property type="evidence" value="ECO:0007669"/>
    <property type="project" value="UniProtKB-UniRule"/>
</dbReference>
<dbReference type="GO" id="GO:0008616">
    <property type="term" value="P:queuosine biosynthetic process"/>
    <property type="evidence" value="ECO:0007669"/>
    <property type="project" value="UniProtKB-UniRule"/>
</dbReference>
<dbReference type="GO" id="GO:0006400">
    <property type="term" value="P:tRNA modification"/>
    <property type="evidence" value="ECO:0007669"/>
    <property type="project" value="UniProtKB-UniRule"/>
</dbReference>
<dbReference type="Gene3D" id="3.30.1130.10">
    <property type="match status" value="2"/>
</dbReference>
<dbReference type="HAMAP" id="MF_00817">
    <property type="entry name" value="QueF_type2"/>
    <property type="match status" value="1"/>
</dbReference>
<dbReference type="InterPro" id="IPR043133">
    <property type="entry name" value="GTP-CH-I_C/QueF"/>
</dbReference>
<dbReference type="InterPro" id="IPR050084">
    <property type="entry name" value="NADPH_dep_7-cyano-7-deazaG_red"/>
</dbReference>
<dbReference type="InterPro" id="IPR029500">
    <property type="entry name" value="QueF"/>
</dbReference>
<dbReference type="InterPro" id="IPR029139">
    <property type="entry name" value="QueF_N"/>
</dbReference>
<dbReference type="InterPro" id="IPR016428">
    <property type="entry name" value="QueF_type2"/>
</dbReference>
<dbReference type="NCBIfam" id="TIGR03138">
    <property type="entry name" value="QueF"/>
    <property type="match status" value="1"/>
</dbReference>
<dbReference type="PANTHER" id="PTHR34354">
    <property type="entry name" value="NADPH-DEPENDENT 7-CYANO-7-DEAZAGUANINE REDUCTASE"/>
    <property type="match status" value="1"/>
</dbReference>
<dbReference type="PANTHER" id="PTHR34354:SF1">
    <property type="entry name" value="NADPH-DEPENDENT 7-CYANO-7-DEAZAGUANINE REDUCTASE"/>
    <property type="match status" value="1"/>
</dbReference>
<dbReference type="Pfam" id="PF14489">
    <property type="entry name" value="QueF"/>
    <property type="match status" value="1"/>
</dbReference>
<dbReference type="Pfam" id="PF14819">
    <property type="entry name" value="QueF_N"/>
    <property type="match status" value="1"/>
</dbReference>
<dbReference type="PIRSF" id="PIRSF004750">
    <property type="entry name" value="Nitrile_oxidored_YqcD_prd"/>
    <property type="match status" value="1"/>
</dbReference>
<dbReference type="SUPFAM" id="SSF55620">
    <property type="entry name" value="Tetrahydrobiopterin biosynthesis enzymes-like"/>
    <property type="match status" value="1"/>
</dbReference>
<feature type="chain" id="PRO_1000134280" description="NADPH-dependent 7-cyano-7-deazaguanine reductase">
    <location>
        <begin position="1"/>
        <end position="285"/>
    </location>
</feature>
<feature type="active site" description="Thioimide intermediate" evidence="1">
    <location>
        <position position="192"/>
    </location>
</feature>
<feature type="active site" description="Proton donor" evidence="1">
    <location>
        <position position="199"/>
    </location>
</feature>
<feature type="binding site" evidence="1">
    <location>
        <begin position="91"/>
        <end position="93"/>
    </location>
    <ligand>
        <name>substrate</name>
    </ligand>
</feature>
<feature type="binding site" evidence="1">
    <location>
        <begin position="93"/>
        <end position="94"/>
    </location>
    <ligand>
        <name>NADPH</name>
        <dbReference type="ChEBI" id="CHEBI:57783"/>
    </ligand>
</feature>
<feature type="binding site" evidence="1">
    <location>
        <begin position="231"/>
        <end position="232"/>
    </location>
    <ligand>
        <name>substrate</name>
    </ligand>
</feature>
<feature type="binding site" evidence="1">
    <location>
        <begin position="260"/>
        <end position="261"/>
    </location>
    <ligand>
        <name>NADPH</name>
        <dbReference type="ChEBI" id="CHEBI:57783"/>
    </ligand>
</feature>
<protein>
    <recommendedName>
        <fullName evidence="1">NADPH-dependent 7-cyano-7-deazaguanine reductase</fullName>
        <ecNumber evidence="1">1.7.1.13</ecNumber>
    </recommendedName>
    <alternativeName>
        <fullName evidence="1">7-cyano-7-carbaguanine reductase</fullName>
    </alternativeName>
    <alternativeName>
        <fullName evidence="1">NADPH-dependent nitrile oxidoreductase</fullName>
    </alternativeName>
    <alternativeName>
        <fullName evidence="1">PreQ(0) reductase</fullName>
    </alternativeName>
</protein>
<sequence>MTNKPLYDQDSTLKNLSLGKITEYKSSYDPTLLQAVPRSLNRNELQLSEHNLPFYGVDLWNIYELSWLNSKGKPVVATGVVKVPFDSKNLIESKSFKLYLNSFNQSKFVSIEAVQKVLTADLSHCADKAVSVELHTDLDNFSDKLGTFSGQCLDVLDIEIDNYQLNADYLQDLSSQEQVTETLYSHLLKSNCLITSQPDWASIEISYTGKKLDREKLLRYLISFRQHNEFHEQCVERIYCDIMKFGQIDSLCVYARYTRRGGLDINPLRTTEHINEINNLRLLRQ</sequence>
<name>QUEF_PSYIN</name>
<accession>A1SYB5</accession>
<keyword id="KW-0963">Cytoplasm</keyword>
<keyword id="KW-0521">NADP</keyword>
<keyword id="KW-0560">Oxidoreductase</keyword>
<keyword id="KW-0671">Queuosine biosynthesis</keyword>
<keyword id="KW-1185">Reference proteome</keyword>
<reference key="1">
    <citation type="journal article" date="2008" name="BMC Genomics">
        <title>Genomics of an extreme psychrophile, Psychromonas ingrahamii.</title>
        <authorList>
            <person name="Riley M."/>
            <person name="Staley J.T."/>
            <person name="Danchin A."/>
            <person name="Wang T.Z."/>
            <person name="Brettin T.S."/>
            <person name="Hauser L.J."/>
            <person name="Land M.L."/>
            <person name="Thompson L.S."/>
        </authorList>
    </citation>
    <scope>NUCLEOTIDE SEQUENCE [LARGE SCALE GENOMIC DNA]</scope>
    <source>
        <strain>DSM 17664 / CCUG 51855 / 37</strain>
    </source>
</reference>